<keyword id="KW-0025">Alternative splicing</keyword>
<keyword id="KW-1003">Cell membrane</keyword>
<keyword id="KW-0406">Ion transport</keyword>
<keyword id="KW-0408">Iron</keyword>
<keyword id="KW-0410">Iron transport</keyword>
<keyword id="KW-0472">Membrane</keyword>
<keyword id="KW-0675">Receptor</keyword>
<keyword id="KW-1185">Reference proteome</keyword>
<keyword id="KW-0812">Transmembrane</keyword>
<keyword id="KW-1133">Transmembrane helix</keyword>
<keyword id="KW-0813">Transport</keyword>
<keyword id="KW-0926">Vacuole</keyword>
<gene>
    <name type="primary">Slc22a17</name>
    <name type="synonym">Boct</name>
</gene>
<protein>
    <recommendedName>
        <fullName>Solute carrier family 22 member 17</fullName>
    </recommendedName>
    <alternativeName>
        <fullName>24p3 receptor</fullName>
        <shortName>24p3R</shortName>
    </alternativeName>
    <alternativeName>
        <fullName>Brain-type organic cation transporter</fullName>
    </alternativeName>
    <alternativeName>
        <fullName>Lipocalin-2 receptor</fullName>
    </alternativeName>
</protein>
<sequence>MPSARFGRRGIVLLTLGLVGPCGVGGAAAGSSTGIMALRFLLGFLLAGVDLGVYLMRLELCDPTQRLRVALAGELVGVGGHFLFLGLALVSKDWRFLQRMITAPCILFLFYGWPGLFLESARWLIVKRQIEEAQSVLRILAERNRPHGQMLGEEAQEALQELENTCPLPATSTFSFASLLNYRNIWKNLLILGFTNFIAHAIRHCYQPVGGGGSPSDFYLCSLLASGTAALACVFLGVTVDRFGRRGILLLSMTLTGIASLVLLGLWDYLNDAAITTFSVLGLFSSQASAILSTLLASEVIPTTVRGRGLGLIMALGALGGLSCPAQRLHMGHGAFLQHVVLAACALLCILSIMLLPETKRKLLPEVLRDGELCRRPSLLRQPPPNRCDHVPLLATPNPAL</sequence>
<accession>Q9D9E0</accession>
<accession>Q9WTM1</accession>
<comment type="function">
    <text evidence="3">Cell surface receptor for LCN2 (24p3) that plays a key role in iron homeostasis and transport. Able to bind iron-bound LCN2 (holo-24p3), followed by internalization of holo-24p3 and release of iron, thereby increasing intracellular iron concentration and leading to inhibition of apoptosis. Also binds iron-free LCN2 (apo-24p3), followed by internalization of apo-24p3 and its association with an intracellular siderophore, leading to iron chelation and iron transfer to the extracellular medium, thereby reducing intracellular iron concentration and resulting in apoptosis.</text>
</comment>
<comment type="subcellular location">
    <subcellularLocation>
        <location evidence="1">Cell membrane</location>
        <topology evidence="1">Multi-pass membrane protein</topology>
    </subcellularLocation>
    <subcellularLocation>
        <location evidence="1">Vacuole membrane</location>
        <topology evidence="1">Multi-pass membrane protein</topology>
    </subcellularLocation>
    <text evidence="1">Upon LCN2-binding, it is internalized.</text>
</comment>
<comment type="alternative products">
    <event type="alternative splicing"/>
    <isoform>
        <id>Q9D9E0-1</id>
        <name>1</name>
        <sequence type="displayed"/>
    </isoform>
    <isoform>
        <id>Q9D9E0-2</id>
        <name>2</name>
        <sequence type="described" ref="VSP_039789"/>
    </isoform>
</comment>
<comment type="tissue specificity">
    <text evidence="3">Widely expressed.</text>
</comment>
<comment type="developmental stage">
    <text evidence="3">Expressed from 7 dpc and throughout development.</text>
</comment>
<comment type="similarity">
    <text evidence="5">Belongs to the major facilitator (TC 2.A.1) superfamily. Organic cation transporter (TC 2.A.1.19) family.</text>
</comment>
<proteinExistence type="evidence at transcript level"/>
<name>S22AH_MOUSE</name>
<evidence type="ECO:0000250" key="1"/>
<evidence type="ECO:0000255" key="2"/>
<evidence type="ECO:0000269" key="3">
    <source>
    </source>
</evidence>
<evidence type="ECO:0000303" key="4">
    <source ref="1"/>
</evidence>
<evidence type="ECO:0000305" key="5"/>
<reference key="1">
    <citation type="submission" date="1998-04" db="EMBL/GenBank/DDBJ databases">
        <title>Mouse organic cation transporter BOCT complete cDNA.</title>
        <authorList>
            <person name="Yaoi T."/>
            <person name="Kuwajima G."/>
            <person name="Nakayama T."/>
        </authorList>
    </citation>
    <scope>NUCLEOTIDE SEQUENCE [MRNA] (ISOFORM 2)</scope>
    <source>
        <strain>BALB/cJ</strain>
        <tissue>Hippocampus</tissue>
    </source>
</reference>
<reference key="2">
    <citation type="journal article" date="2005" name="Science">
        <title>The transcriptional landscape of the mammalian genome.</title>
        <authorList>
            <person name="Carninci P."/>
            <person name="Kasukawa T."/>
            <person name="Katayama S."/>
            <person name="Gough J."/>
            <person name="Frith M.C."/>
            <person name="Maeda N."/>
            <person name="Oyama R."/>
            <person name="Ravasi T."/>
            <person name="Lenhard B."/>
            <person name="Wells C."/>
            <person name="Kodzius R."/>
            <person name="Shimokawa K."/>
            <person name="Bajic V.B."/>
            <person name="Brenner S.E."/>
            <person name="Batalov S."/>
            <person name="Forrest A.R."/>
            <person name="Zavolan M."/>
            <person name="Davis M.J."/>
            <person name="Wilming L.G."/>
            <person name="Aidinis V."/>
            <person name="Allen J.E."/>
            <person name="Ambesi-Impiombato A."/>
            <person name="Apweiler R."/>
            <person name="Aturaliya R.N."/>
            <person name="Bailey T.L."/>
            <person name="Bansal M."/>
            <person name="Baxter L."/>
            <person name="Beisel K.W."/>
            <person name="Bersano T."/>
            <person name="Bono H."/>
            <person name="Chalk A.M."/>
            <person name="Chiu K.P."/>
            <person name="Choudhary V."/>
            <person name="Christoffels A."/>
            <person name="Clutterbuck D.R."/>
            <person name="Crowe M.L."/>
            <person name="Dalla E."/>
            <person name="Dalrymple B.P."/>
            <person name="de Bono B."/>
            <person name="Della Gatta G."/>
            <person name="di Bernardo D."/>
            <person name="Down T."/>
            <person name="Engstrom P."/>
            <person name="Fagiolini M."/>
            <person name="Faulkner G."/>
            <person name="Fletcher C.F."/>
            <person name="Fukushima T."/>
            <person name="Furuno M."/>
            <person name="Futaki S."/>
            <person name="Gariboldi M."/>
            <person name="Georgii-Hemming P."/>
            <person name="Gingeras T.R."/>
            <person name="Gojobori T."/>
            <person name="Green R.E."/>
            <person name="Gustincich S."/>
            <person name="Harbers M."/>
            <person name="Hayashi Y."/>
            <person name="Hensch T.K."/>
            <person name="Hirokawa N."/>
            <person name="Hill D."/>
            <person name="Huminiecki L."/>
            <person name="Iacono M."/>
            <person name="Ikeo K."/>
            <person name="Iwama A."/>
            <person name="Ishikawa T."/>
            <person name="Jakt M."/>
            <person name="Kanapin A."/>
            <person name="Katoh M."/>
            <person name="Kawasawa Y."/>
            <person name="Kelso J."/>
            <person name="Kitamura H."/>
            <person name="Kitano H."/>
            <person name="Kollias G."/>
            <person name="Krishnan S.P."/>
            <person name="Kruger A."/>
            <person name="Kummerfeld S.K."/>
            <person name="Kurochkin I.V."/>
            <person name="Lareau L.F."/>
            <person name="Lazarevic D."/>
            <person name="Lipovich L."/>
            <person name="Liu J."/>
            <person name="Liuni S."/>
            <person name="McWilliam S."/>
            <person name="Madan Babu M."/>
            <person name="Madera M."/>
            <person name="Marchionni L."/>
            <person name="Matsuda H."/>
            <person name="Matsuzawa S."/>
            <person name="Miki H."/>
            <person name="Mignone F."/>
            <person name="Miyake S."/>
            <person name="Morris K."/>
            <person name="Mottagui-Tabar S."/>
            <person name="Mulder N."/>
            <person name="Nakano N."/>
            <person name="Nakauchi H."/>
            <person name="Ng P."/>
            <person name="Nilsson R."/>
            <person name="Nishiguchi S."/>
            <person name="Nishikawa S."/>
            <person name="Nori F."/>
            <person name="Ohara O."/>
            <person name="Okazaki Y."/>
            <person name="Orlando V."/>
            <person name="Pang K.C."/>
            <person name="Pavan W.J."/>
            <person name="Pavesi G."/>
            <person name="Pesole G."/>
            <person name="Petrovsky N."/>
            <person name="Piazza S."/>
            <person name="Reed J."/>
            <person name="Reid J.F."/>
            <person name="Ring B.Z."/>
            <person name="Ringwald M."/>
            <person name="Rost B."/>
            <person name="Ruan Y."/>
            <person name="Salzberg S.L."/>
            <person name="Sandelin A."/>
            <person name="Schneider C."/>
            <person name="Schoenbach C."/>
            <person name="Sekiguchi K."/>
            <person name="Semple C.A."/>
            <person name="Seno S."/>
            <person name="Sessa L."/>
            <person name="Sheng Y."/>
            <person name="Shibata Y."/>
            <person name="Shimada H."/>
            <person name="Shimada K."/>
            <person name="Silva D."/>
            <person name="Sinclair B."/>
            <person name="Sperling S."/>
            <person name="Stupka E."/>
            <person name="Sugiura K."/>
            <person name="Sultana R."/>
            <person name="Takenaka Y."/>
            <person name="Taki K."/>
            <person name="Tammoja K."/>
            <person name="Tan S.L."/>
            <person name="Tang S."/>
            <person name="Taylor M.S."/>
            <person name="Tegner J."/>
            <person name="Teichmann S.A."/>
            <person name="Ueda H.R."/>
            <person name="van Nimwegen E."/>
            <person name="Verardo R."/>
            <person name="Wei C.L."/>
            <person name="Yagi K."/>
            <person name="Yamanishi H."/>
            <person name="Zabarovsky E."/>
            <person name="Zhu S."/>
            <person name="Zimmer A."/>
            <person name="Hide W."/>
            <person name="Bult C."/>
            <person name="Grimmond S.M."/>
            <person name="Teasdale R.D."/>
            <person name="Liu E.T."/>
            <person name="Brusic V."/>
            <person name="Quackenbush J."/>
            <person name="Wahlestedt C."/>
            <person name="Mattick J.S."/>
            <person name="Hume D.A."/>
            <person name="Kai C."/>
            <person name="Sasaki D."/>
            <person name="Tomaru Y."/>
            <person name="Fukuda S."/>
            <person name="Kanamori-Katayama M."/>
            <person name="Suzuki M."/>
            <person name="Aoki J."/>
            <person name="Arakawa T."/>
            <person name="Iida J."/>
            <person name="Imamura K."/>
            <person name="Itoh M."/>
            <person name="Kato T."/>
            <person name="Kawaji H."/>
            <person name="Kawagashira N."/>
            <person name="Kawashima T."/>
            <person name="Kojima M."/>
            <person name="Kondo S."/>
            <person name="Konno H."/>
            <person name="Nakano K."/>
            <person name="Ninomiya N."/>
            <person name="Nishio T."/>
            <person name="Okada M."/>
            <person name="Plessy C."/>
            <person name="Shibata K."/>
            <person name="Shiraki T."/>
            <person name="Suzuki S."/>
            <person name="Tagami M."/>
            <person name="Waki K."/>
            <person name="Watahiki A."/>
            <person name="Okamura-Oho Y."/>
            <person name="Suzuki H."/>
            <person name="Kawai J."/>
            <person name="Hayashizaki Y."/>
        </authorList>
    </citation>
    <scope>NUCLEOTIDE SEQUENCE [LARGE SCALE MRNA] (ISOFORM 1)</scope>
    <source>
        <strain>C57BL/6J</strain>
        <tissue>Testis</tissue>
    </source>
</reference>
<reference key="3">
    <citation type="journal article" date="2005" name="Cell">
        <title>A cell-surface receptor for lipocalin 24p3 selectively mediates apoptosis and iron uptake.</title>
        <authorList>
            <person name="Devireddy L.R."/>
            <person name="Gazin C."/>
            <person name="Zhu X."/>
            <person name="Green M.R."/>
        </authorList>
    </citation>
    <scope>FUNCTION</scope>
    <scope>TISSUE SPECIFICITY</scope>
    <scope>DEVELOPMENTAL STAGE</scope>
</reference>
<feature type="chain" id="PRO_0000398633" description="Solute carrier family 22 member 17">
    <location>
        <begin position="1"/>
        <end position="401"/>
    </location>
</feature>
<feature type="transmembrane region" description="Helical" evidence="2">
    <location>
        <begin position="10"/>
        <end position="30"/>
    </location>
</feature>
<feature type="transmembrane region" description="Helical" evidence="2">
    <location>
        <begin position="35"/>
        <end position="55"/>
    </location>
</feature>
<feature type="transmembrane region" description="Helical" evidence="2">
    <location>
        <begin position="69"/>
        <end position="89"/>
    </location>
</feature>
<feature type="transmembrane region" description="Helical" evidence="2">
    <location>
        <begin position="100"/>
        <end position="120"/>
    </location>
</feature>
<feature type="transmembrane region" description="Helical" evidence="2">
    <location>
        <begin position="184"/>
        <end position="203"/>
    </location>
</feature>
<feature type="transmembrane region" description="Helical" evidence="2">
    <location>
        <begin position="218"/>
        <end position="238"/>
    </location>
</feature>
<feature type="transmembrane region" description="Helical" evidence="2">
    <location>
        <begin position="247"/>
        <end position="267"/>
    </location>
</feature>
<feature type="transmembrane region" description="Helical" evidence="2">
    <location>
        <begin position="277"/>
        <end position="297"/>
    </location>
</feature>
<feature type="transmembrane region" description="Helical" evidence="2">
    <location>
        <begin position="309"/>
        <end position="329"/>
    </location>
</feature>
<feature type="transmembrane region" description="Helical" evidence="2">
    <location>
        <begin position="336"/>
        <end position="356"/>
    </location>
</feature>
<feature type="splice variant" id="VSP_039789" description="In isoform 2." evidence="4">
    <location>
        <begin position="1"/>
        <end position="35"/>
    </location>
</feature>
<feature type="sequence conflict" description="In Ref. 1; BAA76761." evidence="5" ref="1">
    <original>L</original>
    <variation>R</variation>
    <location>
        <position position="51"/>
    </location>
</feature>
<feature type="sequence conflict" description="In Ref. 1; BAA76761." evidence="5" ref="1">
    <original>Q</original>
    <variation>H</variation>
    <location>
        <position position="160"/>
    </location>
</feature>
<feature type="sequence conflict" description="In Ref. 1; BAA76761." evidence="5" ref="1">
    <original>A</original>
    <variation>G</variation>
    <location>
        <position position="274"/>
    </location>
</feature>
<feature type="sequence conflict" description="In Ref. 1; BAA76761." evidence="5" ref="1">
    <original>KL</original>
    <variation>NV</variation>
    <location>
        <begin position="362"/>
        <end position="363"/>
    </location>
</feature>
<organism>
    <name type="scientific">Mus musculus</name>
    <name type="common">Mouse</name>
    <dbReference type="NCBI Taxonomy" id="10090"/>
    <lineage>
        <taxon>Eukaryota</taxon>
        <taxon>Metazoa</taxon>
        <taxon>Chordata</taxon>
        <taxon>Craniata</taxon>
        <taxon>Vertebrata</taxon>
        <taxon>Euteleostomi</taxon>
        <taxon>Mammalia</taxon>
        <taxon>Eutheria</taxon>
        <taxon>Euarchontoglires</taxon>
        <taxon>Glires</taxon>
        <taxon>Rodentia</taxon>
        <taxon>Myomorpha</taxon>
        <taxon>Muroidea</taxon>
        <taxon>Muridae</taxon>
        <taxon>Murinae</taxon>
        <taxon>Mus</taxon>
        <taxon>Mus</taxon>
    </lineage>
</organism>
<dbReference type="EMBL" id="AB012808">
    <property type="protein sequence ID" value="BAA76761.1"/>
    <property type="molecule type" value="mRNA"/>
</dbReference>
<dbReference type="EMBL" id="AK007059">
    <property type="protein sequence ID" value="BAB24845.2"/>
    <property type="molecule type" value="mRNA"/>
</dbReference>
<dbReference type="CCDS" id="CCDS36924.1">
    <molecule id="Q9D9E0-1"/>
</dbReference>
<dbReference type="RefSeq" id="NP_067526.2">
    <molecule id="Q9D9E0-1"/>
    <property type="nucleotide sequence ID" value="NM_021551.4"/>
</dbReference>
<dbReference type="RefSeq" id="XP_030103764.1">
    <molecule id="Q9D9E0-1"/>
    <property type="nucleotide sequence ID" value="XM_030247904.2"/>
</dbReference>
<dbReference type="SMR" id="Q9D9E0"/>
<dbReference type="FunCoup" id="Q9D9E0">
    <property type="interactions" value="438"/>
</dbReference>
<dbReference type="STRING" id="10090.ENSMUSP00000049676"/>
<dbReference type="iPTMnet" id="Q9D9E0"/>
<dbReference type="PhosphoSitePlus" id="Q9D9E0"/>
<dbReference type="PaxDb" id="10090-ENSMUSP00000049676"/>
<dbReference type="ProteomicsDB" id="253358">
    <molecule id="Q9D9E0-1"/>
</dbReference>
<dbReference type="ProteomicsDB" id="253359">
    <molecule id="Q9D9E0-2"/>
</dbReference>
<dbReference type="Antibodypedia" id="111">
    <property type="antibodies" value="213 antibodies from 32 providers"/>
</dbReference>
<dbReference type="DNASU" id="59049"/>
<dbReference type="Ensembl" id="ENSMUST00000050772.10">
    <molecule id="Q9D9E0-1"/>
    <property type="protein sequence ID" value="ENSMUSP00000049676.8"/>
    <property type="gene ID" value="ENSMUSG00000022199.13"/>
</dbReference>
<dbReference type="GeneID" id="59049"/>
<dbReference type="KEGG" id="mmu:59049"/>
<dbReference type="UCSC" id="uc007txk.2">
    <molecule id="Q9D9E0-1"/>
    <property type="organism name" value="mouse"/>
</dbReference>
<dbReference type="AGR" id="MGI:1926225"/>
<dbReference type="CTD" id="51310"/>
<dbReference type="MGI" id="MGI:1926225">
    <property type="gene designation" value="Slc22a17"/>
</dbReference>
<dbReference type="VEuPathDB" id="HostDB:ENSMUSG00000022199"/>
<dbReference type="eggNOG" id="KOG0255">
    <property type="taxonomic scope" value="Eukaryota"/>
</dbReference>
<dbReference type="GeneTree" id="ENSGT00940000160959"/>
<dbReference type="HOGENOM" id="CLU_001265_33_6_1"/>
<dbReference type="InParanoid" id="Q9D9E0"/>
<dbReference type="PhylomeDB" id="Q9D9E0"/>
<dbReference type="TreeFam" id="TF335753"/>
<dbReference type="Reactome" id="R-MMU-917937">
    <property type="pathway name" value="Iron uptake and transport"/>
</dbReference>
<dbReference type="BioGRID-ORCS" id="59049">
    <property type="hits" value="3 hits in 76 CRISPR screens"/>
</dbReference>
<dbReference type="PRO" id="PR:Q9D9E0"/>
<dbReference type="Proteomes" id="UP000000589">
    <property type="component" value="Chromosome 14"/>
</dbReference>
<dbReference type="RNAct" id="Q9D9E0">
    <property type="molecule type" value="protein"/>
</dbReference>
<dbReference type="Bgee" id="ENSMUSG00000022199">
    <property type="expression patterns" value="Expressed in choroid plexus of fourth ventricle and 245 other cell types or tissues"/>
</dbReference>
<dbReference type="ExpressionAtlas" id="Q9D9E0">
    <property type="expression patterns" value="baseline and differential"/>
</dbReference>
<dbReference type="GO" id="GO:0031090">
    <property type="term" value="C:organelle membrane"/>
    <property type="evidence" value="ECO:0000250"/>
    <property type="project" value="UniProtKB"/>
</dbReference>
<dbReference type="GO" id="GO:0005886">
    <property type="term" value="C:plasma membrane"/>
    <property type="evidence" value="ECO:0000250"/>
    <property type="project" value="UniProtKB"/>
</dbReference>
<dbReference type="GO" id="GO:0005774">
    <property type="term" value="C:vacuolar membrane"/>
    <property type="evidence" value="ECO:0007669"/>
    <property type="project" value="UniProtKB-SubCell"/>
</dbReference>
<dbReference type="GO" id="GO:0004888">
    <property type="term" value="F:transmembrane signaling receptor activity"/>
    <property type="evidence" value="ECO:0000315"/>
    <property type="project" value="UniProtKB"/>
</dbReference>
<dbReference type="GO" id="GO:0022857">
    <property type="term" value="F:transmembrane transporter activity"/>
    <property type="evidence" value="ECO:0000304"/>
    <property type="project" value="Reactome"/>
</dbReference>
<dbReference type="GO" id="GO:0015891">
    <property type="term" value="P:siderophore transport"/>
    <property type="evidence" value="ECO:0000315"/>
    <property type="project" value="UniProtKB"/>
</dbReference>
<dbReference type="FunFam" id="1.20.1250.20:FF:000159">
    <property type="entry name" value="Solute carrier family 22 member 17"/>
    <property type="match status" value="1"/>
</dbReference>
<dbReference type="Gene3D" id="1.20.1250.20">
    <property type="entry name" value="MFS general substrate transporter like domains"/>
    <property type="match status" value="1"/>
</dbReference>
<dbReference type="InterPro" id="IPR020846">
    <property type="entry name" value="MFS_dom"/>
</dbReference>
<dbReference type="InterPro" id="IPR005828">
    <property type="entry name" value="MFS_sugar_transport-like"/>
</dbReference>
<dbReference type="InterPro" id="IPR036259">
    <property type="entry name" value="MFS_trans_sf"/>
</dbReference>
<dbReference type="InterPro" id="IPR005829">
    <property type="entry name" value="Sugar_transporter_CS"/>
</dbReference>
<dbReference type="PANTHER" id="PTHR24064">
    <property type="entry name" value="SOLUTE CARRIER FAMILY 22 MEMBER"/>
    <property type="match status" value="1"/>
</dbReference>
<dbReference type="Pfam" id="PF00083">
    <property type="entry name" value="Sugar_tr"/>
    <property type="match status" value="1"/>
</dbReference>
<dbReference type="SUPFAM" id="SSF103473">
    <property type="entry name" value="MFS general substrate transporter"/>
    <property type="match status" value="1"/>
</dbReference>
<dbReference type="PROSITE" id="PS50850">
    <property type="entry name" value="MFS"/>
    <property type="match status" value="1"/>
</dbReference>
<dbReference type="PROSITE" id="PS00216">
    <property type="entry name" value="SUGAR_TRANSPORT_1"/>
    <property type="match status" value="1"/>
</dbReference>